<reference key="1">
    <citation type="journal article" date="2019" name="J. Proteomics">
        <title>Cone snail prolyl-4-hydroxylase alpha-subunit sequences derived from transcriptomic data and mass spectrometric analysis of variable proline hydroxylation in C. amadis venom.</title>
        <authorList>
            <person name="Vijayasarathy M."/>
            <person name="Balaram P."/>
        </authorList>
    </citation>
    <scope>NUCLEOTIDE SEQUENCE [MRNA]</scope>
    <scope>PROTEIN SEQUENCE OF 53-68</scope>
    <scope>SUBCELLULAR LOCATION</scope>
    <scope>IDENTIFICATION BY MASS SPECTROMETRY</scope>
    <scope>HYDROXYLATION AT PRO-66</scope>
    <scope>AMIDATION AT CYS-68</scope>
    <source>
        <tissue>Venom</tissue>
        <tissue>Venom duct</tissue>
    </source>
</reference>
<organism>
    <name type="scientific">Conus amadis</name>
    <name type="common">Amadis cone</name>
    <dbReference type="NCBI Taxonomy" id="198732"/>
    <lineage>
        <taxon>Eukaryota</taxon>
        <taxon>Metazoa</taxon>
        <taxon>Spiralia</taxon>
        <taxon>Lophotrochozoa</taxon>
        <taxon>Mollusca</taxon>
        <taxon>Gastropoda</taxon>
        <taxon>Caenogastropoda</taxon>
        <taxon>Neogastropoda</taxon>
        <taxon>Conoidea</taxon>
        <taxon>Conidae</taxon>
        <taxon>Conus</taxon>
        <taxon>Leptoconus</taxon>
    </lineage>
</organism>
<dbReference type="EMBL" id="MH282814">
    <property type="protein sequence ID" value="AYP73021.1"/>
    <property type="molecule type" value="mRNA"/>
</dbReference>
<dbReference type="GO" id="GO:0005576">
    <property type="term" value="C:extracellular region"/>
    <property type="evidence" value="ECO:0007669"/>
    <property type="project" value="UniProtKB-SubCell"/>
</dbReference>
<dbReference type="GO" id="GO:0008200">
    <property type="term" value="F:ion channel inhibitor activity"/>
    <property type="evidence" value="ECO:0007669"/>
    <property type="project" value="InterPro"/>
</dbReference>
<dbReference type="GO" id="GO:0017080">
    <property type="term" value="F:sodium channel regulator activity"/>
    <property type="evidence" value="ECO:0007669"/>
    <property type="project" value="UniProtKB-KW"/>
</dbReference>
<dbReference type="GO" id="GO:0090729">
    <property type="term" value="F:toxin activity"/>
    <property type="evidence" value="ECO:0007669"/>
    <property type="project" value="UniProtKB-KW"/>
</dbReference>
<dbReference type="InterPro" id="IPR004214">
    <property type="entry name" value="Conotoxin"/>
</dbReference>
<dbReference type="Pfam" id="PF02950">
    <property type="entry name" value="Conotoxin"/>
    <property type="match status" value="1"/>
</dbReference>
<name>CM31_CONAA</name>
<protein>
    <recommendedName>
        <fullName evidence="5">Mu-conotoxin-like Am3.1</fullName>
    </recommendedName>
</protein>
<evidence type="ECO:0000250" key="1">
    <source>
        <dbReference type="UniProtKB" id="P58927"/>
    </source>
</evidence>
<evidence type="ECO:0000255" key="2"/>
<evidence type="ECO:0000256" key="3">
    <source>
        <dbReference type="SAM" id="MobiDB-lite"/>
    </source>
</evidence>
<evidence type="ECO:0000269" key="4">
    <source>
    </source>
</evidence>
<evidence type="ECO:0000305" key="5"/>
<evidence type="ECO:0000305" key="6">
    <source>
    </source>
</evidence>
<accession>A0A3G3C7T5</accession>
<comment type="function">
    <text evidence="1">Mu-conotoxins block voltage-gated sodium channels (Nav).</text>
</comment>
<comment type="subcellular location">
    <subcellularLocation>
        <location evidence="4">Secreted</location>
    </subcellularLocation>
</comment>
<comment type="tissue specificity">
    <text evidence="6">Expressed by the venom duct.</text>
</comment>
<comment type="domain">
    <text evidence="5">The cysteine framework is III (CC-C-C-CC). Classified in the M-2 branch, since 2 residues stand between the fourth and the fifth cysteine residues.</text>
</comment>
<comment type="PTM">
    <text evidence="4">Mostly non-hydroxylated.</text>
</comment>
<comment type="PTM">
    <text evidence="5">Contains 3 disulfide bonds.</text>
</comment>
<comment type="similarity">
    <text evidence="5">Belongs to the conotoxin M family.</text>
</comment>
<sequence length="69" mass="7472">MMSKLRVLLIICLLLFPLTAVPLDGDQPADRPAERTQDDISSEHHPMFDAVRGCCPALACAMGCRPCCG</sequence>
<feature type="signal peptide" evidence="2">
    <location>
        <begin position="1"/>
        <end position="20"/>
    </location>
</feature>
<feature type="propeptide" id="PRO_0000453590" evidence="6">
    <location>
        <begin position="21"/>
        <end position="52"/>
    </location>
</feature>
<feature type="peptide" id="PRO_5018084468" description="Mu-conotoxin-like Am3.1" evidence="4">
    <location>
        <begin position="53"/>
        <end position="68"/>
    </location>
</feature>
<feature type="region of interest" description="Disordered" evidence="3">
    <location>
        <begin position="22"/>
        <end position="43"/>
    </location>
</feature>
<feature type="compositionally biased region" description="Basic and acidic residues" evidence="3">
    <location>
        <begin position="28"/>
        <end position="43"/>
    </location>
</feature>
<feature type="modified residue" description="4-hydroxyproline; partial; in minor form" evidence="4">
    <location>
        <position position="66"/>
    </location>
</feature>
<feature type="modified residue" description="Cysteine amide" evidence="4">
    <location>
        <position position="68"/>
    </location>
</feature>
<proteinExistence type="evidence at protein level"/>
<keyword id="KW-0027">Amidation</keyword>
<keyword id="KW-0903">Direct protein sequencing</keyword>
<keyword id="KW-1015">Disulfide bond</keyword>
<keyword id="KW-0379">Hydroxylation</keyword>
<keyword id="KW-0872">Ion channel impairing toxin</keyword>
<keyword id="KW-0528">Neurotoxin</keyword>
<keyword id="KW-0964">Secreted</keyword>
<keyword id="KW-0732">Signal</keyword>
<keyword id="KW-0800">Toxin</keyword>
<keyword id="KW-0738">Voltage-gated sodium channel impairing toxin</keyword>